<keyword id="KW-0028">Amino-acid biosynthesis</keyword>
<keyword id="KW-0963">Cytoplasm</keyword>
<keyword id="KW-0554">One-carbon metabolism</keyword>
<keyword id="KW-0663">Pyridoxal phosphate</keyword>
<keyword id="KW-0808">Transferase</keyword>
<name>GLYA_PROM9</name>
<dbReference type="EC" id="2.1.2.1" evidence="1"/>
<dbReference type="EMBL" id="CP000111">
    <property type="protein sequence ID" value="ABB49321.1"/>
    <property type="molecule type" value="Genomic_DNA"/>
</dbReference>
<dbReference type="RefSeq" id="WP_011375823.1">
    <property type="nucleotide sequence ID" value="NC_007577.1"/>
</dbReference>
<dbReference type="SMR" id="Q31CS4"/>
<dbReference type="STRING" id="74546.PMT9312_0260"/>
<dbReference type="KEGG" id="pmi:PMT9312_0260"/>
<dbReference type="eggNOG" id="COG0112">
    <property type="taxonomic scope" value="Bacteria"/>
</dbReference>
<dbReference type="HOGENOM" id="CLU_022477_2_1_3"/>
<dbReference type="OrthoDB" id="9803846at2"/>
<dbReference type="UniPathway" id="UPA00193"/>
<dbReference type="UniPathway" id="UPA00288">
    <property type="reaction ID" value="UER01023"/>
</dbReference>
<dbReference type="Proteomes" id="UP000002715">
    <property type="component" value="Chromosome"/>
</dbReference>
<dbReference type="GO" id="GO:0005829">
    <property type="term" value="C:cytosol"/>
    <property type="evidence" value="ECO:0007669"/>
    <property type="project" value="TreeGrafter"/>
</dbReference>
<dbReference type="GO" id="GO:0004372">
    <property type="term" value="F:glycine hydroxymethyltransferase activity"/>
    <property type="evidence" value="ECO:0007669"/>
    <property type="project" value="UniProtKB-UniRule"/>
</dbReference>
<dbReference type="GO" id="GO:0030170">
    <property type="term" value="F:pyridoxal phosphate binding"/>
    <property type="evidence" value="ECO:0007669"/>
    <property type="project" value="UniProtKB-UniRule"/>
</dbReference>
<dbReference type="GO" id="GO:0019264">
    <property type="term" value="P:glycine biosynthetic process from serine"/>
    <property type="evidence" value="ECO:0007669"/>
    <property type="project" value="UniProtKB-UniRule"/>
</dbReference>
<dbReference type="GO" id="GO:0035999">
    <property type="term" value="P:tetrahydrofolate interconversion"/>
    <property type="evidence" value="ECO:0007669"/>
    <property type="project" value="UniProtKB-UniRule"/>
</dbReference>
<dbReference type="CDD" id="cd00378">
    <property type="entry name" value="SHMT"/>
    <property type="match status" value="1"/>
</dbReference>
<dbReference type="FunFam" id="3.40.640.10:FF:000001">
    <property type="entry name" value="Serine hydroxymethyltransferase"/>
    <property type="match status" value="1"/>
</dbReference>
<dbReference type="Gene3D" id="3.90.1150.10">
    <property type="entry name" value="Aspartate Aminotransferase, domain 1"/>
    <property type="match status" value="1"/>
</dbReference>
<dbReference type="Gene3D" id="3.40.640.10">
    <property type="entry name" value="Type I PLP-dependent aspartate aminotransferase-like (Major domain)"/>
    <property type="match status" value="1"/>
</dbReference>
<dbReference type="HAMAP" id="MF_00051">
    <property type="entry name" value="SHMT"/>
    <property type="match status" value="1"/>
</dbReference>
<dbReference type="InterPro" id="IPR015424">
    <property type="entry name" value="PyrdxlP-dep_Trfase"/>
</dbReference>
<dbReference type="InterPro" id="IPR015421">
    <property type="entry name" value="PyrdxlP-dep_Trfase_major"/>
</dbReference>
<dbReference type="InterPro" id="IPR015422">
    <property type="entry name" value="PyrdxlP-dep_Trfase_small"/>
</dbReference>
<dbReference type="InterPro" id="IPR001085">
    <property type="entry name" value="Ser_HO-MeTrfase"/>
</dbReference>
<dbReference type="InterPro" id="IPR049943">
    <property type="entry name" value="Ser_HO-MeTrfase-like"/>
</dbReference>
<dbReference type="InterPro" id="IPR019798">
    <property type="entry name" value="Ser_HO-MeTrfase_PLP_BS"/>
</dbReference>
<dbReference type="InterPro" id="IPR039429">
    <property type="entry name" value="SHMT-like_dom"/>
</dbReference>
<dbReference type="NCBIfam" id="NF000586">
    <property type="entry name" value="PRK00011.1"/>
    <property type="match status" value="1"/>
</dbReference>
<dbReference type="PANTHER" id="PTHR11680">
    <property type="entry name" value="SERINE HYDROXYMETHYLTRANSFERASE"/>
    <property type="match status" value="1"/>
</dbReference>
<dbReference type="PANTHER" id="PTHR11680:SF35">
    <property type="entry name" value="SERINE HYDROXYMETHYLTRANSFERASE 1"/>
    <property type="match status" value="1"/>
</dbReference>
<dbReference type="Pfam" id="PF00464">
    <property type="entry name" value="SHMT"/>
    <property type="match status" value="1"/>
</dbReference>
<dbReference type="PIRSF" id="PIRSF000412">
    <property type="entry name" value="SHMT"/>
    <property type="match status" value="1"/>
</dbReference>
<dbReference type="SUPFAM" id="SSF53383">
    <property type="entry name" value="PLP-dependent transferases"/>
    <property type="match status" value="1"/>
</dbReference>
<dbReference type="PROSITE" id="PS00096">
    <property type="entry name" value="SHMT"/>
    <property type="match status" value="1"/>
</dbReference>
<reference key="1">
    <citation type="journal article" date="2006" name="Science">
        <title>Genomic islands and the ecology and evolution of Prochlorococcus.</title>
        <authorList>
            <person name="Coleman M.L."/>
            <person name="Sullivan M.B."/>
            <person name="Martiny A.C."/>
            <person name="Steglich C."/>
            <person name="Barry K."/>
            <person name="Delong E.F."/>
            <person name="Chisholm S.W."/>
        </authorList>
    </citation>
    <scope>NUCLEOTIDE SEQUENCE [LARGE SCALE GENOMIC DNA]</scope>
    <source>
        <strain>MIT 9312</strain>
    </source>
</reference>
<accession>Q31CS4</accession>
<gene>
    <name evidence="1" type="primary">glyA</name>
    <name type="ordered locus">PMT9312_0260</name>
</gene>
<feature type="chain" id="PRO_0000234998" description="Serine hydroxymethyltransferase">
    <location>
        <begin position="1"/>
        <end position="423"/>
    </location>
</feature>
<feature type="binding site" evidence="1">
    <location>
        <position position="120"/>
    </location>
    <ligand>
        <name>(6S)-5,6,7,8-tetrahydrofolate</name>
        <dbReference type="ChEBI" id="CHEBI:57453"/>
    </ligand>
</feature>
<feature type="binding site" evidence="1">
    <location>
        <begin position="124"/>
        <end position="126"/>
    </location>
    <ligand>
        <name>(6S)-5,6,7,8-tetrahydrofolate</name>
        <dbReference type="ChEBI" id="CHEBI:57453"/>
    </ligand>
</feature>
<feature type="binding site" evidence="1">
    <location>
        <position position="245"/>
    </location>
    <ligand>
        <name>(6S)-5,6,7,8-tetrahydrofolate</name>
        <dbReference type="ChEBI" id="CHEBI:57453"/>
    </ligand>
</feature>
<feature type="binding site" evidence="1">
    <location>
        <begin position="353"/>
        <end position="355"/>
    </location>
    <ligand>
        <name>(6S)-5,6,7,8-tetrahydrofolate</name>
        <dbReference type="ChEBI" id="CHEBI:57453"/>
    </ligand>
</feature>
<feature type="site" description="Plays an important role in substrate specificity" evidence="1">
    <location>
        <position position="228"/>
    </location>
</feature>
<feature type="modified residue" description="N6-(pyridoxal phosphate)lysine" evidence="1">
    <location>
        <position position="229"/>
    </location>
</feature>
<evidence type="ECO:0000255" key="1">
    <source>
        <dbReference type="HAMAP-Rule" id="MF_00051"/>
    </source>
</evidence>
<sequence>MNILQNLKKSDPVISNFINSEKNRQETHLELIASENFASIAVMQAQGSVLTNKYAEGLPQKRYYGGCEFVDEIEELAIQRAKKLFNANWANVQPHSGAQANAAVFLSLLQPGDTIMGMDLSHGGHLTHGSPVNMSGKWFNAVHYGVNKETSELNFDEIREIALETKPKLIICGYSAYPRTIDFESFRNIADEVGAFLMADIAHIAGLVASKLHPNPLPYCDVVTTTTHKTLRGPRGGLILCKDGEFGKKFDKSVFPGTQGGPLEHIIAAKAVAFGEALQPDFVNYSQQVIKNAKVLASTLISRGIDIVSGGTDNHIVLLDLRSINMTGKIADLLVSAVNITANKNTVPFDPESPFVTSGLRLGTAALTTRGFNETAFAEVGEIIADRLLNPNDSVIESQCKDKVLALCNRFPLYEGKLEASIK</sequence>
<protein>
    <recommendedName>
        <fullName evidence="1">Serine hydroxymethyltransferase</fullName>
        <shortName evidence="1">SHMT</shortName>
        <shortName evidence="1">Serine methylase</shortName>
        <ecNumber evidence="1">2.1.2.1</ecNumber>
    </recommendedName>
</protein>
<comment type="function">
    <text evidence="1">Catalyzes the reversible interconversion of serine and glycine with tetrahydrofolate (THF) serving as the one-carbon carrier. This reaction serves as the major source of one-carbon groups required for the biosynthesis of purines, thymidylate, methionine, and other important biomolecules. Also exhibits THF-independent aldolase activity toward beta-hydroxyamino acids, producing glycine and aldehydes, via a retro-aldol mechanism.</text>
</comment>
<comment type="catalytic activity">
    <reaction evidence="1">
        <text>(6R)-5,10-methylene-5,6,7,8-tetrahydrofolate + glycine + H2O = (6S)-5,6,7,8-tetrahydrofolate + L-serine</text>
        <dbReference type="Rhea" id="RHEA:15481"/>
        <dbReference type="ChEBI" id="CHEBI:15377"/>
        <dbReference type="ChEBI" id="CHEBI:15636"/>
        <dbReference type="ChEBI" id="CHEBI:33384"/>
        <dbReference type="ChEBI" id="CHEBI:57305"/>
        <dbReference type="ChEBI" id="CHEBI:57453"/>
        <dbReference type="EC" id="2.1.2.1"/>
    </reaction>
</comment>
<comment type="cofactor">
    <cofactor evidence="1">
        <name>pyridoxal 5'-phosphate</name>
        <dbReference type="ChEBI" id="CHEBI:597326"/>
    </cofactor>
</comment>
<comment type="pathway">
    <text evidence="1">One-carbon metabolism; tetrahydrofolate interconversion.</text>
</comment>
<comment type="pathway">
    <text evidence="1">Amino-acid biosynthesis; glycine biosynthesis; glycine from L-serine: step 1/1.</text>
</comment>
<comment type="subunit">
    <text evidence="1">Homodimer.</text>
</comment>
<comment type="subcellular location">
    <subcellularLocation>
        <location evidence="1">Cytoplasm</location>
    </subcellularLocation>
</comment>
<comment type="similarity">
    <text evidence="1">Belongs to the SHMT family.</text>
</comment>
<proteinExistence type="inferred from homology"/>
<organism>
    <name type="scientific">Prochlorococcus marinus (strain MIT 9312)</name>
    <dbReference type="NCBI Taxonomy" id="74546"/>
    <lineage>
        <taxon>Bacteria</taxon>
        <taxon>Bacillati</taxon>
        <taxon>Cyanobacteriota</taxon>
        <taxon>Cyanophyceae</taxon>
        <taxon>Synechococcales</taxon>
        <taxon>Prochlorococcaceae</taxon>
        <taxon>Prochlorococcus</taxon>
    </lineage>
</organism>